<comment type="function">
    <text evidence="5">Inhibits the nucleation of actin filaments in vitro.</text>
</comment>
<comment type="subunit">
    <text>Binds to actin.</text>
</comment>
<comment type="interaction">
    <interactant intactId="EBI-15622277">
        <id>Q8R1S4</id>
    </interactant>
    <interactant intactId="EBI-15622277">
        <id>Q8R1S4</id>
        <label>Mtss1</label>
    </interactant>
    <organismsDiffer>false</organismsDiffer>
    <experiments>2</experiments>
</comment>
<comment type="interaction">
    <interactant intactId="EBI-15622277">
        <id>Q8R1S4</id>
    </interactant>
    <interactant intactId="EBI-15946047">
        <id>Q99NH2-1</id>
        <label>Pard3</label>
    </interactant>
    <organismsDiffer>false</organismsDiffer>
    <experiments>2</experiments>
</comment>
<comment type="interaction">
    <interactant intactId="EBI-15622277">
        <id>Q8R1S4</id>
    </interactant>
    <interactant intactId="EBI-82016">
        <id>Q62074</id>
        <label>Prkci</label>
    </interactant>
    <organismsDiffer>false</organismsDiffer>
    <experiments>4</experiments>
</comment>
<comment type="subcellular location">
    <subcellularLocation>
        <location>Cytoplasm</location>
        <location>Cytoskeleton</location>
    </subcellularLocation>
</comment>
<comment type="alternative products">
    <event type="alternative splicing"/>
    <isoform>
        <id>Q8R1S4-1</id>
        <name evidence="8">1</name>
        <name evidence="7">Long</name>
        <sequence type="displayed"/>
    </isoform>
    <isoform>
        <id>Q8R1S4-2</id>
        <name evidence="8">2</name>
        <name evidence="7">Short</name>
        <sequence type="described" ref="VSP_050527 VSP_050528 VSP_050529"/>
    </isoform>
</comment>
<comment type="tissue specificity">
    <text evidence="5">Strongly expressed in the developing neurons and skeletal and cardiac muscles in embryos. Strongly expressed also in liver, outer layers of the kidney, and in the Purkinje cells of the brain.</text>
</comment>
<comment type="domain">
    <text evidence="5">The WH2 motif at the C-terminus binds to actin monomers.</text>
</comment>
<comment type="similarity">
    <text evidence="8">Belongs to the MTSS family.</text>
</comment>
<reference evidence="8" key="1">
    <citation type="journal article" date="2003" name="J. Biol. Chem.">
        <title>Mouse MIM, a tissue-specific regulator of cytoskeletal dynamics, interacts with ATP-actin monomers through its C-terminal WH2 domain.</title>
        <authorList>
            <person name="Mattila P.K."/>
            <person name="Salminen M."/>
            <person name="Yamashiro T."/>
            <person name="Lappalainen P."/>
        </authorList>
    </citation>
    <scope>NUCLEOTIDE SEQUENCE [MRNA] (ISOFORMS 1 AND 2)</scope>
    <scope>TISSUE SPECIFICITY</scope>
    <scope>MUTAGENESIS OF LYS-746 AND LYS-747</scope>
    <scope>INTERACTION OF WH2 DOMAIN WITH ACTIN</scope>
    <source>
        <strain evidence="11">FVB/N</strain>
    </source>
</reference>
<reference evidence="8" key="2">
    <citation type="journal article" date="2004" name="Genome Res.">
        <title>The status, quality, and expansion of the NIH full-length cDNA project: the Mammalian Gene Collection (MGC).</title>
        <authorList>
            <consortium name="The MGC Project Team"/>
        </authorList>
    </citation>
    <scope>NUCLEOTIDE SEQUENCE [LARGE SCALE MRNA] (ISOFORM 1)</scope>
    <source>
        <strain evidence="6">C57BL/6J</strain>
        <strain evidence="10">FVB/N</strain>
        <tissue evidence="6">Liver</tissue>
        <tissue evidence="6">Mammary gland</tissue>
    </source>
</reference>
<reference key="3">
    <citation type="journal article" date="2005" name="Science">
        <title>The transcriptional landscape of the mammalian genome.</title>
        <authorList>
            <person name="Carninci P."/>
            <person name="Kasukawa T."/>
            <person name="Katayama S."/>
            <person name="Gough J."/>
            <person name="Frith M.C."/>
            <person name="Maeda N."/>
            <person name="Oyama R."/>
            <person name="Ravasi T."/>
            <person name="Lenhard B."/>
            <person name="Wells C."/>
            <person name="Kodzius R."/>
            <person name="Shimokawa K."/>
            <person name="Bajic V.B."/>
            <person name="Brenner S.E."/>
            <person name="Batalov S."/>
            <person name="Forrest A.R."/>
            <person name="Zavolan M."/>
            <person name="Davis M.J."/>
            <person name="Wilming L.G."/>
            <person name="Aidinis V."/>
            <person name="Allen J.E."/>
            <person name="Ambesi-Impiombato A."/>
            <person name="Apweiler R."/>
            <person name="Aturaliya R.N."/>
            <person name="Bailey T.L."/>
            <person name="Bansal M."/>
            <person name="Baxter L."/>
            <person name="Beisel K.W."/>
            <person name="Bersano T."/>
            <person name="Bono H."/>
            <person name="Chalk A.M."/>
            <person name="Chiu K.P."/>
            <person name="Choudhary V."/>
            <person name="Christoffels A."/>
            <person name="Clutterbuck D.R."/>
            <person name="Crowe M.L."/>
            <person name="Dalla E."/>
            <person name="Dalrymple B.P."/>
            <person name="de Bono B."/>
            <person name="Della Gatta G."/>
            <person name="di Bernardo D."/>
            <person name="Down T."/>
            <person name="Engstrom P."/>
            <person name="Fagiolini M."/>
            <person name="Faulkner G."/>
            <person name="Fletcher C.F."/>
            <person name="Fukushima T."/>
            <person name="Furuno M."/>
            <person name="Futaki S."/>
            <person name="Gariboldi M."/>
            <person name="Georgii-Hemming P."/>
            <person name="Gingeras T.R."/>
            <person name="Gojobori T."/>
            <person name="Green R.E."/>
            <person name="Gustincich S."/>
            <person name="Harbers M."/>
            <person name="Hayashi Y."/>
            <person name="Hensch T.K."/>
            <person name="Hirokawa N."/>
            <person name="Hill D."/>
            <person name="Huminiecki L."/>
            <person name="Iacono M."/>
            <person name="Ikeo K."/>
            <person name="Iwama A."/>
            <person name="Ishikawa T."/>
            <person name="Jakt M."/>
            <person name="Kanapin A."/>
            <person name="Katoh M."/>
            <person name="Kawasawa Y."/>
            <person name="Kelso J."/>
            <person name="Kitamura H."/>
            <person name="Kitano H."/>
            <person name="Kollias G."/>
            <person name="Krishnan S.P."/>
            <person name="Kruger A."/>
            <person name="Kummerfeld S.K."/>
            <person name="Kurochkin I.V."/>
            <person name="Lareau L.F."/>
            <person name="Lazarevic D."/>
            <person name="Lipovich L."/>
            <person name="Liu J."/>
            <person name="Liuni S."/>
            <person name="McWilliam S."/>
            <person name="Madan Babu M."/>
            <person name="Madera M."/>
            <person name="Marchionni L."/>
            <person name="Matsuda H."/>
            <person name="Matsuzawa S."/>
            <person name="Miki H."/>
            <person name="Mignone F."/>
            <person name="Miyake S."/>
            <person name="Morris K."/>
            <person name="Mottagui-Tabar S."/>
            <person name="Mulder N."/>
            <person name="Nakano N."/>
            <person name="Nakauchi H."/>
            <person name="Ng P."/>
            <person name="Nilsson R."/>
            <person name="Nishiguchi S."/>
            <person name="Nishikawa S."/>
            <person name="Nori F."/>
            <person name="Ohara O."/>
            <person name="Okazaki Y."/>
            <person name="Orlando V."/>
            <person name="Pang K.C."/>
            <person name="Pavan W.J."/>
            <person name="Pavesi G."/>
            <person name="Pesole G."/>
            <person name="Petrovsky N."/>
            <person name="Piazza S."/>
            <person name="Reed J."/>
            <person name="Reid J.F."/>
            <person name="Ring B.Z."/>
            <person name="Ringwald M."/>
            <person name="Rost B."/>
            <person name="Ruan Y."/>
            <person name="Salzberg S.L."/>
            <person name="Sandelin A."/>
            <person name="Schneider C."/>
            <person name="Schoenbach C."/>
            <person name="Sekiguchi K."/>
            <person name="Semple C.A."/>
            <person name="Seno S."/>
            <person name="Sessa L."/>
            <person name="Sheng Y."/>
            <person name="Shibata Y."/>
            <person name="Shimada H."/>
            <person name="Shimada K."/>
            <person name="Silva D."/>
            <person name="Sinclair B."/>
            <person name="Sperling S."/>
            <person name="Stupka E."/>
            <person name="Sugiura K."/>
            <person name="Sultana R."/>
            <person name="Takenaka Y."/>
            <person name="Taki K."/>
            <person name="Tammoja K."/>
            <person name="Tan S.L."/>
            <person name="Tang S."/>
            <person name="Taylor M.S."/>
            <person name="Tegner J."/>
            <person name="Teichmann S.A."/>
            <person name="Ueda H.R."/>
            <person name="van Nimwegen E."/>
            <person name="Verardo R."/>
            <person name="Wei C.L."/>
            <person name="Yagi K."/>
            <person name="Yamanishi H."/>
            <person name="Zabarovsky E."/>
            <person name="Zhu S."/>
            <person name="Zimmer A."/>
            <person name="Hide W."/>
            <person name="Bult C."/>
            <person name="Grimmond S.M."/>
            <person name="Teasdale R.D."/>
            <person name="Liu E.T."/>
            <person name="Brusic V."/>
            <person name="Quackenbush J."/>
            <person name="Wahlestedt C."/>
            <person name="Mattick J.S."/>
            <person name="Hume D.A."/>
            <person name="Kai C."/>
            <person name="Sasaki D."/>
            <person name="Tomaru Y."/>
            <person name="Fukuda S."/>
            <person name="Kanamori-Katayama M."/>
            <person name="Suzuki M."/>
            <person name="Aoki J."/>
            <person name="Arakawa T."/>
            <person name="Iida J."/>
            <person name="Imamura K."/>
            <person name="Itoh M."/>
            <person name="Kato T."/>
            <person name="Kawaji H."/>
            <person name="Kawagashira N."/>
            <person name="Kawashima T."/>
            <person name="Kojima M."/>
            <person name="Kondo S."/>
            <person name="Konno H."/>
            <person name="Nakano K."/>
            <person name="Ninomiya N."/>
            <person name="Nishio T."/>
            <person name="Okada M."/>
            <person name="Plessy C."/>
            <person name="Shibata K."/>
            <person name="Shiraki T."/>
            <person name="Suzuki S."/>
            <person name="Tagami M."/>
            <person name="Waki K."/>
            <person name="Watahiki A."/>
            <person name="Okamura-Oho Y."/>
            <person name="Suzuki H."/>
            <person name="Kawai J."/>
            <person name="Hayashizaki Y."/>
        </authorList>
    </citation>
    <scope>NUCLEOTIDE SEQUENCE [LARGE SCALE MRNA] OF 82-759 (ISOFORM 1)</scope>
    <source>
        <strain>C57BL/6J</strain>
        <tissue>Pituitary</tissue>
    </source>
</reference>
<reference key="4">
    <citation type="journal article" date="2007" name="Proc. Natl. Acad. Sci. U.S.A.">
        <title>Large-scale phosphorylation analysis of mouse liver.</title>
        <authorList>
            <person name="Villen J."/>
            <person name="Beausoleil S.A."/>
            <person name="Gerber S.A."/>
            <person name="Gygi S.P."/>
        </authorList>
    </citation>
    <scope>PHOSPHORYLATION [LARGE SCALE ANALYSIS] AT SER-326</scope>
    <scope>IDENTIFICATION BY MASS SPECTROMETRY [LARGE SCALE ANALYSIS]</scope>
    <source>
        <tissue>Liver</tissue>
    </source>
</reference>
<reference key="5">
    <citation type="journal article" date="2010" name="Cell">
        <title>A tissue-specific atlas of mouse protein phosphorylation and expression.</title>
        <authorList>
            <person name="Huttlin E.L."/>
            <person name="Jedrychowski M.P."/>
            <person name="Elias J.E."/>
            <person name="Goswami T."/>
            <person name="Rad R."/>
            <person name="Beausoleil S.A."/>
            <person name="Villen J."/>
            <person name="Haas W."/>
            <person name="Sowa M.E."/>
            <person name="Gygi S.P."/>
        </authorList>
    </citation>
    <scope>PHOSPHORYLATION [LARGE SCALE ANALYSIS] AT THR-262; SER-265; SER-266; SER-275; THR-429; THR-607; SER-648 AND SER-651</scope>
    <scope>IDENTIFICATION BY MASS SPECTROMETRY [LARGE SCALE ANALYSIS]</scope>
    <source>
        <tissue>Brain</tissue>
        <tissue>Brown adipose tissue</tissue>
        <tissue>Heart</tissue>
        <tissue>Kidney</tissue>
        <tissue>Lung</tissue>
        <tissue>Pancreas</tissue>
        <tissue>Spleen</tissue>
    </source>
</reference>
<evidence type="ECO:0000255" key="1"/>
<evidence type="ECO:0000255" key="2">
    <source>
        <dbReference type="PROSITE-ProRule" id="PRU00406"/>
    </source>
</evidence>
<evidence type="ECO:0000255" key="3">
    <source>
        <dbReference type="PROSITE-ProRule" id="PRU00668"/>
    </source>
</evidence>
<evidence type="ECO:0000256" key="4">
    <source>
        <dbReference type="SAM" id="MobiDB-lite"/>
    </source>
</evidence>
<evidence type="ECO:0000269" key="5">
    <source>
    </source>
</evidence>
<evidence type="ECO:0000269" key="6">
    <source>
    </source>
</evidence>
<evidence type="ECO:0000303" key="7">
    <source>
    </source>
</evidence>
<evidence type="ECO:0000305" key="8"/>
<evidence type="ECO:0000312" key="9">
    <source>
        <dbReference type="EMBL" id="AAH24131.1"/>
    </source>
</evidence>
<evidence type="ECO:0000312" key="10">
    <source>
        <dbReference type="EMBL" id="AAH42632.1"/>
    </source>
</evidence>
<evidence type="ECO:0000312" key="11">
    <source>
        <dbReference type="EMBL" id="AAO52743.1"/>
    </source>
</evidence>
<evidence type="ECO:0000312" key="12">
    <source>
        <dbReference type="MGI" id="MGI:2384818"/>
    </source>
</evidence>
<evidence type="ECO:0007744" key="13">
    <source>
    </source>
</evidence>
<evidence type="ECO:0007744" key="14">
    <source>
    </source>
</evidence>
<evidence type="ECO:0007829" key="15">
    <source>
        <dbReference type="PDB" id="2D1L"/>
    </source>
</evidence>
<sequence length="759" mass="82408">MEAVIEKECSALGGLFQTIISDMKGSYPVWEDFINKAGKLQSQLRTTVVAAAAFLDAFQKVADMATNTRGGTREIGSALTRMCMRHRSIEAKLRQFSSALIDCLINPLQEQMEEWKKVANQLDKDHAKEYKKARQEIKNKSSDTLKLQKKAKKVDAQGRGDIQPQLDSALQDVNDKYLLLEETEKQAVRKALIEERGRFCTFISMLRPVIEEEISMLGEITHLQTISEDLKSLTMDPHKLPSSSEQVILDLKGSDYSWSYQTPPSSPSTTMSRKSSVCSSLNSVNSSDSRSSGSHSHSPSSHYRYRSSNLAQQAPVRLSSVSSHDSGFISQDAFQSKSPSPMPPEAANQLSNGFSHCSLSSESHAGPVGAGPFPHCLPASRLLPRVTSVHLPDYAHYYTIGPGMFPSSQIPSWKDWAKPGPYDQPLVNTLQRRKEKREPDSNGGGPTTTGGPPAGAEEAQRPRSMTVSAATRPGEEMAACEELTLALSRGLQLDVQRSSRDSLQCSSGYSTQTTTPCCSEDTIPSQVSDYDYFSVSGDQEAEQQEFDKSSTIPRNSDISQSYRRMFQAKRPASTAGLPTTLGPAMVTPGVATIRRTPSTKPSVRRGTIGAGPIPIKTPVIPVKTPTVPDLPGVLPSPPDGPEERGEHSPESPSAGEGPQGVSNIPSSLWSGQAPVNPPLPGPKPSIPEEHRQAIPESEAEDQERDPPSATVSPGPIPESDPADLSPRESPQGEDMLNAIRRGVKLKKTTTNDRSAPRFS</sequence>
<accession>Q8R1S4</accession>
<accession>Q8BMM3</accession>
<accession>Q99LB3</accession>
<name>MTSS1_MOUSE</name>
<proteinExistence type="evidence at protein level"/>
<keyword id="KW-0002">3D-structure</keyword>
<keyword id="KW-0009">Actin-binding</keyword>
<keyword id="KW-0025">Alternative splicing</keyword>
<keyword id="KW-0175">Coiled coil</keyword>
<keyword id="KW-0963">Cytoplasm</keyword>
<keyword id="KW-0206">Cytoskeleton</keyword>
<keyword id="KW-0597">Phosphoprotein</keyword>
<keyword id="KW-1185">Reference proteome</keyword>
<protein>
    <recommendedName>
        <fullName evidence="8">Protein MTSS 1</fullName>
    </recommendedName>
    <alternativeName>
        <fullName>Metastasis suppressor protein 1</fullName>
    </alternativeName>
    <alternativeName>
        <fullName>Missing in metastasis protein</fullName>
    </alternativeName>
</protein>
<dbReference type="EMBL" id="AY214918">
    <property type="protein sequence ID" value="AAO52743.1"/>
    <property type="molecule type" value="mRNA"/>
</dbReference>
<dbReference type="EMBL" id="BC003483">
    <property type="protein sequence ID" value="AAH03483.1"/>
    <property type="molecule type" value="mRNA"/>
</dbReference>
<dbReference type="EMBL" id="BC024131">
    <property type="protein sequence ID" value="AAH24131.1"/>
    <property type="molecule type" value="mRNA"/>
</dbReference>
<dbReference type="EMBL" id="BC042632">
    <property type="protein sequence ID" value="AAH42632.1"/>
    <property type="molecule type" value="mRNA"/>
</dbReference>
<dbReference type="EMBL" id="AK030533">
    <property type="protein sequence ID" value="BAC27008.1"/>
    <property type="molecule type" value="mRNA"/>
</dbReference>
<dbReference type="CCDS" id="CCDS27496.1">
    <molecule id="Q8R1S4-1"/>
</dbReference>
<dbReference type="RefSeq" id="NP_659049.2">
    <property type="nucleotide sequence ID" value="NM_144800.2"/>
</dbReference>
<dbReference type="PDB" id="2D1L">
    <property type="method" value="X-ray"/>
    <property type="resolution" value="1.85 A"/>
    <property type="chains" value="A/B=1-250"/>
</dbReference>
<dbReference type="PDBsum" id="2D1L"/>
<dbReference type="SMR" id="Q8R1S4"/>
<dbReference type="BioGRID" id="229230">
    <property type="interactions" value="5"/>
</dbReference>
<dbReference type="DIP" id="DIP-29271N"/>
<dbReference type="FunCoup" id="Q8R1S4">
    <property type="interactions" value="147"/>
</dbReference>
<dbReference type="IntAct" id="Q8R1S4">
    <property type="interactions" value="4"/>
</dbReference>
<dbReference type="STRING" id="10090.ENSMUSP00000079239"/>
<dbReference type="GlyGen" id="Q8R1S4">
    <property type="glycosylation" value="4 sites, 1 O-linked glycan (3 sites)"/>
</dbReference>
<dbReference type="iPTMnet" id="Q8R1S4"/>
<dbReference type="PhosphoSitePlus" id="Q8R1S4"/>
<dbReference type="jPOST" id="Q8R1S4"/>
<dbReference type="PaxDb" id="10090-ENSMUSP00000079239"/>
<dbReference type="ProteomicsDB" id="290218">
    <molecule id="Q8R1S4-1"/>
</dbReference>
<dbReference type="ProteomicsDB" id="290219">
    <molecule id="Q8R1S4-2"/>
</dbReference>
<dbReference type="DNASU" id="211401"/>
<dbReference type="GeneID" id="211401"/>
<dbReference type="KEGG" id="mmu:211401"/>
<dbReference type="AGR" id="MGI:2384818"/>
<dbReference type="CTD" id="9788"/>
<dbReference type="MGI" id="MGI:2384818">
    <property type="gene designation" value="Mtss1"/>
</dbReference>
<dbReference type="eggNOG" id="ENOG502QRG4">
    <property type="taxonomic scope" value="Eukaryota"/>
</dbReference>
<dbReference type="InParanoid" id="Q8R1S4"/>
<dbReference type="OrthoDB" id="10061327at2759"/>
<dbReference type="PhylomeDB" id="Q8R1S4"/>
<dbReference type="BioGRID-ORCS" id="211401">
    <property type="hits" value="7 hits in 80 CRISPR screens"/>
</dbReference>
<dbReference type="ChiTaRS" id="Mtss1">
    <property type="organism name" value="mouse"/>
</dbReference>
<dbReference type="EvolutionaryTrace" id="Q8R1S4"/>
<dbReference type="PRO" id="PR:Q8R1S4"/>
<dbReference type="Proteomes" id="UP000000589">
    <property type="component" value="Unplaced"/>
</dbReference>
<dbReference type="RNAct" id="Q8R1S4">
    <property type="molecule type" value="protein"/>
</dbReference>
<dbReference type="GO" id="GO:0015629">
    <property type="term" value="C:actin cytoskeleton"/>
    <property type="evidence" value="ECO:0000250"/>
    <property type="project" value="UniProtKB"/>
</dbReference>
<dbReference type="GO" id="GO:0005912">
    <property type="term" value="C:adherens junction"/>
    <property type="evidence" value="ECO:0000314"/>
    <property type="project" value="MGI"/>
</dbReference>
<dbReference type="GO" id="GO:0005737">
    <property type="term" value="C:cytoplasm"/>
    <property type="evidence" value="ECO:0000314"/>
    <property type="project" value="MGI"/>
</dbReference>
<dbReference type="GO" id="GO:0003779">
    <property type="term" value="F:actin binding"/>
    <property type="evidence" value="ECO:0000314"/>
    <property type="project" value="MGI"/>
</dbReference>
<dbReference type="GO" id="GO:0051015">
    <property type="term" value="F:actin filament binding"/>
    <property type="evidence" value="ECO:0000314"/>
    <property type="project" value="MGI"/>
</dbReference>
<dbReference type="GO" id="GO:0003785">
    <property type="term" value="F:actin monomer binding"/>
    <property type="evidence" value="ECO:0000250"/>
    <property type="project" value="UniProtKB"/>
</dbReference>
<dbReference type="GO" id="GO:0042802">
    <property type="term" value="F:identical protein binding"/>
    <property type="evidence" value="ECO:0000353"/>
    <property type="project" value="IntAct"/>
</dbReference>
<dbReference type="GO" id="GO:0005102">
    <property type="term" value="F:signaling receptor binding"/>
    <property type="evidence" value="ECO:0000250"/>
    <property type="project" value="UniProtKB"/>
</dbReference>
<dbReference type="GO" id="GO:0007015">
    <property type="term" value="P:actin filament organization"/>
    <property type="evidence" value="ECO:0000314"/>
    <property type="project" value="MGI"/>
</dbReference>
<dbReference type="GO" id="GO:0030041">
    <property type="term" value="P:actin filament polymerization"/>
    <property type="evidence" value="ECO:0000314"/>
    <property type="project" value="MGI"/>
</dbReference>
<dbReference type="GO" id="GO:0034334">
    <property type="term" value="P:adherens junction maintenance"/>
    <property type="evidence" value="ECO:0000315"/>
    <property type="project" value="MGI"/>
</dbReference>
<dbReference type="GO" id="GO:0030282">
    <property type="term" value="P:bone mineralization"/>
    <property type="evidence" value="ECO:0000315"/>
    <property type="project" value="MGI"/>
</dbReference>
<dbReference type="GO" id="GO:0071498">
    <property type="term" value="P:cellular response to fluid shear stress"/>
    <property type="evidence" value="ECO:0000314"/>
    <property type="project" value="UniProtKB"/>
</dbReference>
<dbReference type="GO" id="GO:2001013">
    <property type="term" value="P:epithelial cell proliferation involved in renal tubule morphogenesis"/>
    <property type="evidence" value="ECO:0000315"/>
    <property type="project" value="UniProtKB"/>
</dbReference>
<dbReference type="GO" id="GO:0072102">
    <property type="term" value="P:glomerulus morphogenesis"/>
    <property type="evidence" value="ECO:0000315"/>
    <property type="project" value="UniProtKB"/>
</dbReference>
<dbReference type="GO" id="GO:0001701">
    <property type="term" value="P:in utero embryonic development"/>
    <property type="evidence" value="ECO:0000316"/>
    <property type="project" value="MGI"/>
</dbReference>
<dbReference type="GO" id="GO:0010960">
    <property type="term" value="P:magnesium ion homeostasis"/>
    <property type="evidence" value="ECO:0000315"/>
    <property type="project" value="MGI"/>
</dbReference>
<dbReference type="GO" id="GO:0072170">
    <property type="term" value="P:metanephric tubule development"/>
    <property type="evidence" value="ECO:0000315"/>
    <property type="project" value="MGI"/>
</dbReference>
<dbReference type="GO" id="GO:0007517">
    <property type="term" value="P:muscle organ development"/>
    <property type="evidence" value="ECO:0000303"/>
    <property type="project" value="UniProtKB"/>
</dbReference>
<dbReference type="GO" id="GO:0050680">
    <property type="term" value="P:negative regulation of epithelial cell proliferation"/>
    <property type="evidence" value="ECO:0000315"/>
    <property type="project" value="UniProtKB"/>
</dbReference>
<dbReference type="GO" id="GO:0072160">
    <property type="term" value="P:nephron tubule epithelial cell differentiation"/>
    <property type="evidence" value="ECO:0000315"/>
    <property type="project" value="UniProtKB"/>
</dbReference>
<dbReference type="GO" id="GO:0007399">
    <property type="term" value="P:nervous system development"/>
    <property type="evidence" value="ECO:0000303"/>
    <property type="project" value="UniProtKB"/>
</dbReference>
<dbReference type="GO" id="GO:0007009">
    <property type="term" value="P:plasma membrane organization"/>
    <property type="evidence" value="ECO:0007669"/>
    <property type="project" value="InterPro"/>
</dbReference>
<dbReference type="GO" id="GO:0032233">
    <property type="term" value="P:positive regulation of actin filament bundle assembly"/>
    <property type="evidence" value="ECO:0000315"/>
    <property type="project" value="MGI"/>
</dbReference>
<dbReference type="GO" id="GO:0061333">
    <property type="term" value="P:renal tubule morphogenesis"/>
    <property type="evidence" value="ECO:0000315"/>
    <property type="project" value="UniProtKB"/>
</dbReference>
<dbReference type="CDD" id="cd07643">
    <property type="entry name" value="I-BAR_IMD_MIM"/>
    <property type="match status" value="1"/>
</dbReference>
<dbReference type="CDD" id="cd22060">
    <property type="entry name" value="WH2_MTSS1"/>
    <property type="match status" value="1"/>
</dbReference>
<dbReference type="DisProt" id="DP02569"/>
<dbReference type="FunFam" id="1.20.1270.60:FF:000010">
    <property type="entry name" value="Metastasis suppressor 1, isoform CRA_e"/>
    <property type="match status" value="1"/>
</dbReference>
<dbReference type="Gene3D" id="1.20.1270.60">
    <property type="entry name" value="Arfaptin homology (AH) domain/BAR domain"/>
    <property type="match status" value="1"/>
</dbReference>
<dbReference type="InterPro" id="IPR027267">
    <property type="entry name" value="AH/BAR_dom_sf"/>
</dbReference>
<dbReference type="InterPro" id="IPR013606">
    <property type="entry name" value="I-BAR_dom"/>
</dbReference>
<dbReference type="InterPro" id="IPR030127">
    <property type="entry name" value="MTSS1/MTSS2"/>
</dbReference>
<dbReference type="InterPro" id="IPR003124">
    <property type="entry name" value="WH2_dom"/>
</dbReference>
<dbReference type="PANTHER" id="PTHR15708">
    <property type="entry name" value="ACTIN BUNDLING/MISSING IN METASTASIS-RELATED"/>
    <property type="match status" value="1"/>
</dbReference>
<dbReference type="PANTHER" id="PTHR15708:SF10">
    <property type="entry name" value="PROTEIN MTSS 1"/>
    <property type="match status" value="1"/>
</dbReference>
<dbReference type="Pfam" id="PF08397">
    <property type="entry name" value="IMD"/>
    <property type="match status" value="1"/>
</dbReference>
<dbReference type="Pfam" id="PF02205">
    <property type="entry name" value="WH2"/>
    <property type="match status" value="1"/>
</dbReference>
<dbReference type="SUPFAM" id="SSF103657">
    <property type="entry name" value="BAR/IMD domain-like"/>
    <property type="match status" value="1"/>
</dbReference>
<dbReference type="PROSITE" id="PS51338">
    <property type="entry name" value="IMD"/>
    <property type="match status" value="1"/>
</dbReference>
<dbReference type="PROSITE" id="PS51082">
    <property type="entry name" value="WH2"/>
    <property type="match status" value="1"/>
</dbReference>
<organism evidence="9">
    <name type="scientific">Mus musculus</name>
    <name type="common">Mouse</name>
    <dbReference type="NCBI Taxonomy" id="10090"/>
    <lineage>
        <taxon>Eukaryota</taxon>
        <taxon>Metazoa</taxon>
        <taxon>Chordata</taxon>
        <taxon>Craniata</taxon>
        <taxon>Vertebrata</taxon>
        <taxon>Euteleostomi</taxon>
        <taxon>Mammalia</taxon>
        <taxon>Eutheria</taxon>
        <taxon>Euarchontoglires</taxon>
        <taxon>Glires</taxon>
        <taxon>Rodentia</taxon>
        <taxon>Myomorpha</taxon>
        <taxon>Muroidea</taxon>
        <taxon>Muridae</taxon>
        <taxon>Murinae</taxon>
        <taxon>Mus</taxon>
        <taxon>Mus</taxon>
    </lineage>
</organism>
<gene>
    <name evidence="12" type="primary">Mtss1</name>
    <name type="synonym">Mim</name>
</gene>
<feature type="chain" id="PRO_0000096640" description="Protein MTSS 1">
    <location>
        <begin position="1"/>
        <end position="759"/>
    </location>
</feature>
<feature type="domain" description="IMD" evidence="3">
    <location>
        <begin position="1"/>
        <end position="254"/>
    </location>
</feature>
<feature type="domain" description="WH2" evidence="2 8">
    <location>
        <begin position="731"/>
        <end position="748"/>
    </location>
</feature>
<feature type="region of interest" description="Disordered" evidence="4">
    <location>
        <begin position="259"/>
        <end position="309"/>
    </location>
</feature>
<feature type="region of interest" description="Disordered" evidence="4">
    <location>
        <begin position="331"/>
        <end position="354"/>
    </location>
</feature>
<feature type="region of interest" description="Disordered" evidence="4">
    <location>
        <begin position="431"/>
        <end position="472"/>
    </location>
</feature>
<feature type="region of interest" description="Disordered" evidence="4">
    <location>
        <begin position="569"/>
        <end position="759"/>
    </location>
</feature>
<feature type="coiled-coil region" evidence="1">
    <location>
        <begin position="108"/>
        <end position="157"/>
    </location>
</feature>
<feature type="compositionally biased region" description="Low complexity" evidence="4">
    <location>
        <begin position="612"/>
        <end position="627"/>
    </location>
</feature>
<feature type="compositionally biased region" description="Polar residues" evidence="4">
    <location>
        <begin position="660"/>
        <end position="670"/>
    </location>
</feature>
<feature type="compositionally biased region" description="Pro residues" evidence="4">
    <location>
        <begin position="675"/>
        <end position="685"/>
    </location>
</feature>
<feature type="modified residue" description="Phosphothreonine" evidence="14">
    <location>
        <position position="262"/>
    </location>
</feature>
<feature type="modified residue" description="Phosphoserine" evidence="14">
    <location>
        <position position="265"/>
    </location>
</feature>
<feature type="modified residue" description="Phosphoserine" evidence="14">
    <location>
        <position position="266"/>
    </location>
</feature>
<feature type="modified residue" description="Phosphoserine" evidence="14">
    <location>
        <position position="275"/>
    </location>
</feature>
<feature type="modified residue" description="Phosphoserine" evidence="13">
    <location>
        <position position="326"/>
    </location>
</feature>
<feature type="modified residue" description="Phosphothreonine" evidence="14">
    <location>
        <position position="429"/>
    </location>
</feature>
<feature type="modified residue" description="Phosphothreonine" evidence="14">
    <location>
        <position position="607"/>
    </location>
</feature>
<feature type="modified residue" description="Phosphoserine" evidence="14">
    <location>
        <position position="648"/>
    </location>
</feature>
<feature type="modified residue" description="Phosphoserine" evidence="14">
    <location>
        <position position="651"/>
    </location>
</feature>
<feature type="splice variant" id="VSP_050527" description="In isoform 2." evidence="7">
    <original>L</original>
    <variation>P</variation>
    <location>
        <position position="483"/>
    </location>
</feature>
<feature type="splice variant" id="VSP_050528" description="In isoform 2." evidence="7">
    <original>L</original>
    <variation>P</variation>
    <location>
        <position position="487"/>
    </location>
</feature>
<feature type="splice variant" id="VSP_050529" description="In isoform 2." evidence="7">
    <location>
        <begin position="646"/>
        <end position="681"/>
    </location>
</feature>
<feature type="mutagenesis site" description="Loss of actin-binding." evidence="5">
    <original>K</original>
    <variation>A</variation>
    <location>
        <position position="746"/>
    </location>
</feature>
<feature type="mutagenesis site" description="Loss of actin-binding." evidence="5">
    <original>K</original>
    <variation>A</variation>
    <location>
        <position position="747"/>
    </location>
</feature>
<feature type="sequence conflict" description="In Ref. 3; BAC27008." evidence="8" ref="3">
    <original>N</original>
    <variation>K</variation>
    <location>
        <position position="139"/>
    </location>
</feature>
<feature type="sequence conflict" description="In Ref. 3; BAC27008." evidence="8" ref="3">
    <original>F</original>
    <variation>L</variation>
    <location>
        <position position="758"/>
    </location>
</feature>
<feature type="helix" evidence="15">
    <location>
        <begin position="1"/>
        <end position="24"/>
    </location>
</feature>
<feature type="helix" evidence="15">
    <location>
        <begin position="27"/>
        <end position="66"/>
    </location>
</feature>
<feature type="helix" evidence="15">
    <location>
        <begin position="71"/>
        <end position="103"/>
    </location>
</feature>
<feature type="helix" evidence="15">
    <location>
        <begin position="105"/>
        <end position="150"/>
    </location>
</feature>
<feature type="helix" evidence="15">
    <location>
        <begin position="154"/>
        <end position="156"/>
    </location>
</feature>
<feature type="turn" evidence="15">
    <location>
        <begin position="157"/>
        <end position="159"/>
    </location>
</feature>
<feature type="helix" evidence="15">
    <location>
        <begin position="162"/>
        <end position="214"/>
    </location>
</feature>
<feature type="helix" evidence="15">
    <location>
        <begin position="215"/>
        <end position="219"/>
    </location>
</feature>
<feature type="helix" evidence="15">
    <location>
        <begin position="220"/>
        <end position="233"/>
    </location>
</feature>
<feature type="helix" evidence="15">
    <location>
        <begin position="242"/>
        <end position="244"/>
    </location>
</feature>